<reference key="1">
    <citation type="journal article" date="2003" name="J. Bacteriol.">
        <title>Comparative analyses of the complete genome sequences of Pierce's disease and citrus variegated chlorosis strains of Xylella fastidiosa.</title>
        <authorList>
            <person name="Van Sluys M.A."/>
            <person name="de Oliveira M.C."/>
            <person name="Monteiro-Vitorello C.B."/>
            <person name="Miyaki C.Y."/>
            <person name="Furlan L.R."/>
            <person name="Camargo L.E.A."/>
            <person name="da Silva A.C.R."/>
            <person name="Moon D.H."/>
            <person name="Takita M.A."/>
            <person name="Lemos E.G.M."/>
            <person name="Machado M.A."/>
            <person name="Ferro M.I.T."/>
            <person name="da Silva F.R."/>
            <person name="Goldman M.H.S."/>
            <person name="Goldman G.H."/>
            <person name="Lemos M.V.F."/>
            <person name="El-Dorry H."/>
            <person name="Tsai S.M."/>
            <person name="Carrer H."/>
            <person name="Carraro D.M."/>
            <person name="de Oliveira R.C."/>
            <person name="Nunes L.R."/>
            <person name="Siqueira W.J."/>
            <person name="Coutinho L.L."/>
            <person name="Kimura E.T."/>
            <person name="Ferro E.S."/>
            <person name="Harakava R."/>
            <person name="Kuramae E.E."/>
            <person name="Marino C.L."/>
            <person name="Giglioti E."/>
            <person name="Abreu I.L."/>
            <person name="Alves L.M.C."/>
            <person name="do Amaral A.M."/>
            <person name="Baia G.S."/>
            <person name="Blanco S.R."/>
            <person name="Brito M.S."/>
            <person name="Cannavan F.S."/>
            <person name="Celestino A.V."/>
            <person name="da Cunha A.F."/>
            <person name="Fenille R.C."/>
            <person name="Ferro J.A."/>
            <person name="Formighieri E.F."/>
            <person name="Kishi L.T."/>
            <person name="Leoni S.G."/>
            <person name="Oliveira A.R."/>
            <person name="Rosa V.E. Jr."/>
            <person name="Sassaki F.T."/>
            <person name="Sena J.A.D."/>
            <person name="de Souza A.A."/>
            <person name="Truffi D."/>
            <person name="Tsukumo F."/>
            <person name="Yanai G.M."/>
            <person name="Zaros L.G."/>
            <person name="Civerolo E.L."/>
            <person name="Simpson A.J.G."/>
            <person name="Almeida N.F. Jr."/>
            <person name="Setubal J.C."/>
            <person name="Kitajima J.P."/>
        </authorList>
    </citation>
    <scope>NUCLEOTIDE SEQUENCE [LARGE SCALE GENOMIC DNA]</scope>
    <source>
        <strain>Temecula1 / ATCC 700964</strain>
    </source>
</reference>
<comment type="similarity">
    <text evidence="1">Belongs to the bacterial ribosomal protein bL33 family.</text>
</comment>
<protein>
    <recommendedName>
        <fullName evidence="1">Large ribosomal subunit protein bL33</fullName>
    </recommendedName>
    <alternativeName>
        <fullName>50S ribosomal protein L33</fullName>
    </alternativeName>
</protein>
<sequence>MAGKRDKIRLISSADTGHFYTTDKNKKNTPGKLEFKKYDPRVRRHVIYKEGKIK</sequence>
<evidence type="ECO:0000305" key="1"/>
<name>RL33_XYLFT</name>
<dbReference type="EMBL" id="AE009442">
    <property type="protein sequence ID" value="AAO28364.1"/>
    <property type="molecule type" value="Genomic_DNA"/>
</dbReference>
<dbReference type="RefSeq" id="WP_004086566.1">
    <property type="nucleotide sequence ID" value="NC_004556.1"/>
</dbReference>
<dbReference type="SMR" id="P66241"/>
<dbReference type="GeneID" id="93904191"/>
<dbReference type="KEGG" id="xft:PD_0489"/>
<dbReference type="HOGENOM" id="CLU_190949_1_1_6"/>
<dbReference type="Proteomes" id="UP000002516">
    <property type="component" value="Chromosome"/>
</dbReference>
<dbReference type="GO" id="GO:0022625">
    <property type="term" value="C:cytosolic large ribosomal subunit"/>
    <property type="evidence" value="ECO:0007669"/>
    <property type="project" value="TreeGrafter"/>
</dbReference>
<dbReference type="GO" id="GO:0003735">
    <property type="term" value="F:structural constituent of ribosome"/>
    <property type="evidence" value="ECO:0007669"/>
    <property type="project" value="InterPro"/>
</dbReference>
<dbReference type="GO" id="GO:0006412">
    <property type="term" value="P:translation"/>
    <property type="evidence" value="ECO:0007669"/>
    <property type="project" value="UniProtKB-UniRule"/>
</dbReference>
<dbReference type="FunFam" id="2.20.28.120:FF:000001">
    <property type="entry name" value="50S ribosomal protein L33"/>
    <property type="match status" value="1"/>
</dbReference>
<dbReference type="Gene3D" id="2.20.28.120">
    <property type="entry name" value="Ribosomal protein L33"/>
    <property type="match status" value="1"/>
</dbReference>
<dbReference type="HAMAP" id="MF_00294">
    <property type="entry name" value="Ribosomal_bL33"/>
    <property type="match status" value="1"/>
</dbReference>
<dbReference type="InterPro" id="IPR001705">
    <property type="entry name" value="Ribosomal_bL33"/>
</dbReference>
<dbReference type="InterPro" id="IPR018264">
    <property type="entry name" value="Ribosomal_bL33_CS"/>
</dbReference>
<dbReference type="InterPro" id="IPR038584">
    <property type="entry name" value="Ribosomal_bL33_sf"/>
</dbReference>
<dbReference type="InterPro" id="IPR011332">
    <property type="entry name" value="Ribosomal_zn-bd"/>
</dbReference>
<dbReference type="NCBIfam" id="NF001860">
    <property type="entry name" value="PRK00595.1"/>
    <property type="match status" value="1"/>
</dbReference>
<dbReference type="NCBIfam" id="TIGR01023">
    <property type="entry name" value="rpmG_bact"/>
    <property type="match status" value="1"/>
</dbReference>
<dbReference type="PANTHER" id="PTHR15238">
    <property type="entry name" value="54S RIBOSOMAL PROTEIN L39, MITOCHONDRIAL"/>
    <property type="match status" value="1"/>
</dbReference>
<dbReference type="PANTHER" id="PTHR15238:SF1">
    <property type="entry name" value="LARGE RIBOSOMAL SUBUNIT PROTEIN BL33M"/>
    <property type="match status" value="1"/>
</dbReference>
<dbReference type="Pfam" id="PF00471">
    <property type="entry name" value="Ribosomal_L33"/>
    <property type="match status" value="1"/>
</dbReference>
<dbReference type="SUPFAM" id="SSF57829">
    <property type="entry name" value="Zn-binding ribosomal proteins"/>
    <property type="match status" value="1"/>
</dbReference>
<dbReference type="PROSITE" id="PS00582">
    <property type="entry name" value="RIBOSOMAL_L33"/>
    <property type="match status" value="1"/>
</dbReference>
<feature type="chain" id="PRO_0000170269" description="Large ribosomal subunit protein bL33">
    <location>
        <begin position="1"/>
        <end position="54"/>
    </location>
</feature>
<accession>P66241</accession>
<accession>Q9PE21</accession>
<organism>
    <name type="scientific">Xylella fastidiosa (strain Temecula1 / ATCC 700964)</name>
    <dbReference type="NCBI Taxonomy" id="183190"/>
    <lineage>
        <taxon>Bacteria</taxon>
        <taxon>Pseudomonadati</taxon>
        <taxon>Pseudomonadota</taxon>
        <taxon>Gammaproteobacteria</taxon>
        <taxon>Lysobacterales</taxon>
        <taxon>Lysobacteraceae</taxon>
        <taxon>Xylella</taxon>
    </lineage>
</organism>
<proteinExistence type="inferred from homology"/>
<gene>
    <name type="primary">rpmG</name>
    <name type="ordered locus">PD_0489</name>
</gene>
<keyword id="KW-1185">Reference proteome</keyword>
<keyword id="KW-0687">Ribonucleoprotein</keyword>
<keyword id="KW-0689">Ribosomal protein</keyword>